<evidence type="ECO:0000255" key="1">
    <source>
        <dbReference type="PROSITE-ProRule" id="PRU00042"/>
    </source>
</evidence>
<evidence type="ECO:0000255" key="2">
    <source>
        <dbReference type="PROSITE-ProRule" id="PRU00119"/>
    </source>
</evidence>
<evidence type="ECO:0000305" key="3"/>
<comment type="function">
    <text>May be involved in transcriptional regulation.</text>
</comment>
<comment type="subcellular location">
    <subcellularLocation>
        <location evidence="3">Nucleus</location>
    </subcellularLocation>
</comment>
<comment type="similarity">
    <text evidence="3">Belongs to the krueppel C2H2-type zinc-finger protein family.</text>
</comment>
<gene>
    <name type="primary">ZNF620</name>
</gene>
<accession>Q5RB33</accession>
<keyword id="KW-0238">DNA-binding</keyword>
<keyword id="KW-0479">Metal-binding</keyword>
<keyword id="KW-0539">Nucleus</keyword>
<keyword id="KW-1185">Reference proteome</keyword>
<keyword id="KW-0677">Repeat</keyword>
<keyword id="KW-0804">Transcription</keyword>
<keyword id="KW-0805">Transcription regulation</keyword>
<keyword id="KW-0862">Zinc</keyword>
<keyword id="KW-0863">Zinc-finger</keyword>
<organism>
    <name type="scientific">Pongo abelii</name>
    <name type="common">Sumatran orangutan</name>
    <name type="synonym">Pongo pygmaeus abelii</name>
    <dbReference type="NCBI Taxonomy" id="9601"/>
    <lineage>
        <taxon>Eukaryota</taxon>
        <taxon>Metazoa</taxon>
        <taxon>Chordata</taxon>
        <taxon>Craniata</taxon>
        <taxon>Vertebrata</taxon>
        <taxon>Euteleostomi</taxon>
        <taxon>Mammalia</taxon>
        <taxon>Eutheria</taxon>
        <taxon>Euarchontoglires</taxon>
        <taxon>Primates</taxon>
        <taxon>Haplorrhini</taxon>
        <taxon>Catarrhini</taxon>
        <taxon>Hominidae</taxon>
        <taxon>Pongo</taxon>
    </lineage>
</organism>
<feature type="chain" id="PRO_0000047692" description="Zinc finger protein 620">
    <location>
        <begin position="1"/>
        <end position="422"/>
    </location>
</feature>
<feature type="domain" description="KRAB" evidence="2">
    <location>
        <begin position="11"/>
        <end position="82"/>
    </location>
</feature>
<feature type="zinc finger region" description="C2H2-type 1; degenerate" evidence="1">
    <location>
        <begin position="196"/>
        <end position="218"/>
    </location>
</feature>
<feature type="zinc finger region" description="C2H2-type 2" evidence="1">
    <location>
        <begin position="224"/>
        <end position="246"/>
    </location>
</feature>
<feature type="zinc finger region" description="C2H2-type 3" evidence="1">
    <location>
        <begin position="252"/>
        <end position="274"/>
    </location>
</feature>
<feature type="zinc finger region" description="C2H2-type 4" evidence="1">
    <location>
        <begin position="280"/>
        <end position="302"/>
    </location>
</feature>
<feature type="zinc finger region" description="C2H2-type 5" evidence="1">
    <location>
        <begin position="308"/>
        <end position="330"/>
    </location>
</feature>
<feature type="zinc finger region" description="C2H2-type 6" evidence="1">
    <location>
        <begin position="336"/>
        <end position="358"/>
    </location>
</feature>
<feature type="zinc finger region" description="C2H2-type 7" evidence="1">
    <location>
        <begin position="364"/>
        <end position="386"/>
    </location>
</feature>
<feature type="zinc finger region" description="C2H2-type 8; degenerate" evidence="1">
    <location>
        <begin position="392"/>
        <end position="414"/>
    </location>
</feature>
<name>ZN620_PONAB</name>
<proteinExistence type="evidence at transcript level"/>
<reference key="1">
    <citation type="submission" date="2004-11" db="EMBL/GenBank/DDBJ databases">
        <authorList>
            <consortium name="The German cDNA consortium"/>
        </authorList>
    </citation>
    <scope>NUCLEOTIDE SEQUENCE [LARGE SCALE MRNA]</scope>
    <source>
        <tissue>Kidney</tissue>
    </source>
</reference>
<dbReference type="EMBL" id="CR858824">
    <property type="protein sequence ID" value="CAH91027.1"/>
    <property type="molecule type" value="mRNA"/>
</dbReference>
<dbReference type="RefSeq" id="NP_001125593.1">
    <property type="nucleotide sequence ID" value="NM_001132121.1"/>
</dbReference>
<dbReference type="SMR" id="Q5RB33"/>
<dbReference type="FunCoup" id="Q5RB33">
    <property type="interactions" value="98"/>
</dbReference>
<dbReference type="GeneID" id="100172509"/>
<dbReference type="KEGG" id="pon:100172509"/>
<dbReference type="CTD" id="253639"/>
<dbReference type="eggNOG" id="KOG1721">
    <property type="taxonomic scope" value="Eukaryota"/>
</dbReference>
<dbReference type="InParanoid" id="Q5RB33"/>
<dbReference type="OrthoDB" id="6077919at2759"/>
<dbReference type="Proteomes" id="UP000001595">
    <property type="component" value="Unplaced"/>
</dbReference>
<dbReference type="GO" id="GO:0005634">
    <property type="term" value="C:nucleus"/>
    <property type="evidence" value="ECO:0007669"/>
    <property type="project" value="UniProtKB-SubCell"/>
</dbReference>
<dbReference type="GO" id="GO:0003677">
    <property type="term" value="F:DNA binding"/>
    <property type="evidence" value="ECO:0007669"/>
    <property type="project" value="UniProtKB-KW"/>
</dbReference>
<dbReference type="GO" id="GO:0008270">
    <property type="term" value="F:zinc ion binding"/>
    <property type="evidence" value="ECO:0007669"/>
    <property type="project" value="UniProtKB-KW"/>
</dbReference>
<dbReference type="GO" id="GO:0006355">
    <property type="term" value="P:regulation of DNA-templated transcription"/>
    <property type="evidence" value="ECO:0007669"/>
    <property type="project" value="InterPro"/>
</dbReference>
<dbReference type="CDD" id="cd07765">
    <property type="entry name" value="KRAB_A-box"/>
    <property type="match status" value="1"/>
</dbReference>
<dbReference type="FunFam" id="3.30.160.60:FF:000136">
    <property type="entry name" value="GLI family zinc finger 4"/>
    <property type="match status" value="1"/>
</dbReference>
<dbReference type="FunFam" id="3.30.160.60:FF:000024">
    <property type="entry name" value="zinc finger protein 140 isoform X1"/>
    <property type="match status" value="1"/>
</dbReference>
<dbReference type="FunFam" id="3.30.160.60:FF:002343">
    <property type="entry name" value="Zinc finger protein 33A"/>
    <property type="match status" value="1"/>
</dbReference>
<dbReference type="FunFam" id="3.30.160.60:FF:002090">
    <property type="entry name" value="Zinc finger protein 473"/>
    <property type="match status" value="1"/>
</dbReference>
<dbReference type="FunFam" id="3.30.160.60:FF:002254">
    <property type="entry name" value="Zinc finger protein 540"/>
    <property type="match status" value="1"/>
</dbReference>
<dbReference type="FunFam" id="3.30.160.60:FF:000384">
    <property type="entry name" value="Zinc finger protein 550"/>
    <property type="match status" value="1"/>
</dbReference>
<dbReference type="FunFam" id="3.30.160.60:FF:001742">
    <property type="entry name" value="Zinc finger protein 620"/>
    <property type="match status" value="1"/>
</dbReference>
<dbReference type="Gene3D" id="6.10.140.140">
    <property type="match status" value="1"/>
</dbReference>
<dbReference type="Gene3D" id="3.30.160.60">
    <property type="entry name" value="Classic Zinc Finger"/>
    <property type="match status" value="7"/>
</dbReference>
<dbReference type="InterPro" id="IPR001909">
    <property type="entry name" value="KRAB"/>
</dbReference>
<dbReference type="InterPro" id="IPR036051">
    <property type="entry name" value="KRAB_dom_sf"/>
</dbReference>
<dbReference type="InterPro" id="IPR050758">
    <property type="entry name" value="Znf_C2H2-type"/>
</dbReference>
<dbReference type="InterPro" id="IPR036236">
    <property type="entry name" value="Znf_C2H2_sf"/>
</dbReference>
<dbReference type="InterPro" id="IPR013087">
    <property type="entry name" value="Znf_C2H2_type"/>
</dbReference>
<dbReference type="PANTHER" id="PTHR23234:SF10">
    <property type="entry name" value="RIKEN CDNA 6720489N17 GENE-RELATED"/>
    <property type="match status" value="1"/>
</dbReference>
<dbReference type="PANTHER" id="PTHR23234">
    <property type="entry name" value="ZNF44 PROTEIN"/>
    <property type="match status" value="1"/>
</dbReference>
<dbReference type="Pfam" id="PF01352">
    <property type="entry name" value="KRAB"/>
    <property type="match status" value="1"/>
</dbReference>
<dbReference type="Pfam" id="PF00096">
    <property type="entry name" value="zf-C2H2"/>
    <property type="match status" value="4"/>
</dbReference>
<dbReference type="Pfam" id="PF13465">
    <property type="entry name" value="zf-H2C2_2"/>
    <property type="match status" value="1"/>
</dbReference>
<dbReference type="SMART" id="SM00349">
    <property type="entry name" value="KRAB"/>
    <property type="match status" value="1"/>
</dbReference>
<dbReference type="SMART" id="SM00355">
    <property type="entry name" value="ZnF_C2H2"/>
    <property type="match status" value="8"/>
</dbReference>
<dbReference type="SUPFAM" id="SSF57667">
    <property type="entry name" value="beta-beta-alpha zinc fingers"/>
    <property type="match status" value="4"/>
</dbReference>
<dbReference type="SUPFAM" id="SSF109640">
    <property type="entry name" value="KRAB domain (Kruppel-associated box)"/>
    <property type="match status" value="1"/>
</dbReference>
<dbReference type="PROSITE" id="PS50805">
    <property type="entry name" value="KRAB"/>
    <property type="match status" value="1"/>
</dbReference>
<dbReference type="PROSITE" id="PS00028">
    <property type="entry name" value="ZINC_FINGER_C2H2_1"/>
    <property type="match status" value="6"/>
</dbReference>
<dbReference type="PROSITE" id="PS50157">
    <property type="entry name" value="ZINC_FINGER_C2H2_2"/>
    <property type="match status" value="8"/>
</dbReference>
<protein>
    <recommendedName>
        <fullName>Zinc finger protein 620</fullName>
    </recommendedName>
</protein>
<sequence>MFQTAWRQEPVTFEDVAVYFTQNEWASLDSVQRALYREVMLENYANVASLAFPFTTPVLVSQLEQGELPWGLDPWEPMGREALRGICPGDEARTEKEGLTPKDHVFKETESFRLMVGELPGNVSQHLDFGSSLEQPQGHWIIKTKSKRRHFTDTSARHHEAYAVKNGEKFEKLGKNISVSTQLTTNQTNPSGQISYECGQRGRYFIRMADFHRHQKCHTGEKSFECKECGKDFRYNSLLIRHQIIHTGKKPFKCKECGKGLSSDTALIQHQRIHTGEKPYECKECGKAFSSSSVFLQHQRFHTGEKLYECNECWKTFSCSSSFTVHQRMHTGEKPYECKECGKRLSSNTALTQHQRIHTGEKPFECKECGKAFNQKITLIQHQRVHTGEKPYERKVCGKTFSWCGRFILHQKLHTQKTPVQA</sequence>